<sequence length="392" mass="42816">MASVEEIRNAQRAKGPATILAIGTATPDHCVYQSDYADYYFRVTKSEHMTELKKKFNRICDKSMIKKRYIHLTEEMLEEHPNIGAYMAPSLNIRQEIITVEVPKLGKEAALKALKEWGQPKSKITHLVFCTTSGVEMPGADYKLANLLGLETSVRRVMLYHQGCYAGGTVLRTAKDLAENNAGARVLVVCSEITVVTFRGPSEDALDSLVGQALFGDGSAAVIVGSDPDVSIERPLFQLVSAAQTFIPNSAGAIAGNLREVGLTFHLWPNVPTLISENVEKCLTQAFDPLGISDWNSLFWIAHPGGPAILDAVEAKLNLDKKKLEATRHVLSEYGNMSSACVLFILDEMRKKSHKGEKATTGEGLDWGVLFGFGPGLTIETVVLHSIPMVTN</sequence>
<name>THS3_VITVI</name>
<dbReference type="EC" id="2.3.1.95"/>
<dbReference type="EMBL" id="FN596000">
    <property type="protein sequence ID" value="CCB56433.1"/>
    <property type="molecule type" value="Genomic_DNA"/>
</dbReference>
<dbReference type="EMBL" id="FN597040">
    <property type="status" value="NOT_ANNOTATED_CDS"/>
    <property type="molecule type" value="Genomic_DNA"/>
</dbReference>
<dbReference type="EMBL" id="S63227">
    <property type="status" value="NOT_ANNOTATED_CDS"/>
    <property type="molecule type" value="mRNA"/>
</dbReference>
<dbReference type="SMR" id="P51071"/>
<dbReference type="STRING" id="29760.P51071"/>
<dbReference type="PaxDb" id="29760-VIT_16s0100g01030.t01"/>
<dbReference type="eggNOG" id="ENOG502QRSY">
    <property type="taxonomic scope" value="Eukaryota"/>
</dbReference>
<dbReference type="HOGENOM" id="CLU_034992_2_0_1"/>
<dbReference type="InParanoid" id="P51071"/>
<dbReference type="BRENDA" id="2.3.1.95">
    <property type="organism ID" value="6671"/>
</dbReference>
<dbReference type="UniPathway" id="UPA00372">
    <property type="reaction ID" value="UER00548"/>
</dbReference>
<dbReference type="Proteomes" id="UP000009183">
    <property type="component" value="Chromosome 16"/>
</dbReference>
<dbReference type="ExpressionAtlas" id="P51071">
    <property type="expression patterns" value="baseline and differential"/>
</dbReference>
<dbReference type="GO" id="GO:0005737">
    <property type="term" value="C:cytoplasm"/>
    <property type="evidence" value="ECO:0007669"/>
    <property type="project" value="UniProtKB-SubCell"/>
</dbReference>
<dbReference type="GO" id="GO:0016747">
    <property type="term" value="F:acyltransferase activity, transferring groups other than amino-acyl groups"/>
    <property type="evidence" value="ECO:0000318"/>
    <property type="project" value="GO_Central"/>
</dbReference>
<dbReference type="GO" id="GO:0050350">
    <property type="term" value="F:trihydroxystilbene synthase activity"/>
    <property type="evidence" value="ECO:0007669"/>
    <property type="project" value="UniProtKB-EC"/>
</dbReference>
<dbReference type="GO" id="GO:0006952">
    <property type="term" value="P:defense response"/>
    <property type="evidence" value="ECO:0007669"/>
    <property type="project" value="UniProtKB-KW"/>
</dbReference>
<dbReference type="GO" id="GO:0030639">
    <property type="term" value="P:polyketide biosynthetic process"/>
    <property type="evidence" value="ECO:0000318"/>
    <property type="project" value="GO_Central"/>
</dbReference>
<dbReference type="CDD" id="cd00831">
    <property type="entry name" value="CHS_like"/>
    <property type="match status" value="1"/>
</dbReference>
<dbReference type="FunFam" id="3.40.47.10:FF:000014">
    <property type="entry name" value="Chalcone synthase 1"/>
    <property type="match status" value="1"/>
</dbReference>
<dbReference type="FunFam" id="3.40.47.10:FF:000025">
    <property type="entry name" value="Chalcone synthase 2"/>
    <property type="match status" value="1"/>
</dbReference>
<dbReference type="Gene3D" id="3.40.47.10">
    <property type="match status" value="2"/>
</dbReference>
<dbReference type="InterPro" id="IPR012328">
    <property type="entry name" value="Chalcone/stilbene_synt_C"/>
</dbReference>
<dbReference type="InterPro" id="IPR001099">
    <property type="entry name" value="Chalcone/stilbene_synt_N"/>
</dbReference>
<dbReference type="InterPro" id="IPR018088">
    <property type="entry name" value="Chalcone/stilbene_synthase_AS"/>
</dbReference>
<dbReference type="InterPro" id="IPR011141">
    <property type="entry name" value="Polyketide_synthase_type-III"/>
</dbReference>
<dbReference type="InterPro" id="IPR016039">
    <property type="entry name" value="Thiolase-like"/>
</dbReference>
<dbReference type="PANTHER" id="PTHR11877:SF14">
    <property type="entry name" value="CHALCONE SYNTHASE"/>
    <property type="match status" value="1"/>
</dbReference>
<dbReference type="PANTHER" id="PTHR11877">
    <property type="entry name" value="HYDROXYMETHYLGLUTARYL-COA SYNTHASE"/>
    <property type="match status" value="1"/>
</dbReference>
<dbReference type="Pfam" id="PF02797">
    <property type="entry name" value="Chal_sti_synt_C"/>
    <property type="match status" value="1"/>
</dbReference>
<dbReference type="Pfam" id="PF00195">
    <property type="entry name" value="Chal_sti_synt_N"/>
    <property type="match status" value="1"/>
</dbReference>
<dbReference type="PIRSF" id="PIRSF000451">
    <property type="entry name" value="PKS_III"/>
    <property type="match status" value="1"/>
</dbReference>
<dbReference type="SUPFAM" id="SSF53901">
    <property type="entry name" value="Thiolase-like"/>
    <property type="match status" value="2"/>
</dbReference>
<dbReference type="PROSITE" id="PS00441">
    <property type="entry name" value="CHALCONE_SYNTH"/>
    <property type="match status" value="1"/>
</dbReference>
<gene>
    <name type="ordered locus">VIT_16s0100g01030</name>
</gene>
<keyword id="KW-0012">Acyltransferase</keyword>
<keyword id="KW-0963">Cytoplasm</keyword>
<keyword id="KW-0611">Plant defense</keyword>
<keyword id="KW-1185">Reference proteome</keyword>
<keyword id="KW-0346">Stress response</keyword>
<keyword id="KW-0808">Transferase</keyword>
<feature type="chain" id="PRO_0000216084" description="Stilbene synthase 3">
    <location>
        <begin position="1"/>
        <end position="392"/>
    </location>
</feature>
<feature type="active site" evidence="2">
    <location>
        <position position="164"/>
    </location>
</feature>
<feature type="binding site" evidence="1">
    <location>
        <begin position="55"/>
        <end position="58"/>
    </location>
    <ligand>
        <name>substrate</name>
    </ligand>
</feature>
<feature type="binding site" evidence="1">
    <location>
        <position position="267"/>
    </location>
    <ligand>
        <name>substrate</name>
    </ligand>
</feature>
<feature type="binding site" evidence="1">
    <location>
        <begin position="305"/>
        <end position="307"/>
    </location>
    <ligand>
        <name>substrate</name>
    </ligand>
</feature>
<feature type="sequence conflict" description="In Ref. 1; S63227." evidence="3" ref="1">
    <original>HMT</original>
    <variation>PMS</variation>
    <location>
        <begin position="48"/>
        <end position="50"/>
    </location>
</feature>
<feature type="sequence conflict" description="In Ref. 1; S63227." evidence="3" ref="1">
    <original>V</original>
    <variation>A</variation>
    <location>
        <position position="100"/>
    </location>
</feature>
<protein>
    <recommendedName>
        <fullName>Stilbene synthase 3</fullName>
        <ecNumber>2.3.1.95</ecNumber>
    </recommendedName>
    <alternativeName>
        <fullName>PSV368</fullName>
    </alternativeName>
    <alternativeName>
        <fullName>Resveratrol synthase 3</fullName>
    </alternativeName>
    <alternativeName>
        <fullName>Trihydroxystilbene synthase 3</fullName>
        <shortName>StSy 3</shortName>
    </alternativeName>
</protein>
<accession>P51071</accession>
<accession>F6HP27</accession>
<evidence type="ECO:0000250" key="1"/>
<evidence type="ECO:0000255" key="2">
    <source>
        <dbReference type="PROSITE-ProRule" id="PRU10023"/>
    </source>
</evidence>
<evidence type="ECO:0000305" key="3"/>
<comment type="function">
    <text evidence="1">Mediates resistance to pathogens which are sensitive to stilbenes.</text>
</comment>
<comment type="catalytic activity">
    <reaction>
        <text>4-coumaroyl-CoA + 3 malonyl-CoA + 3 H(+) = trans-resveratrol + 4 CO2 + 4 CoA</text>
        <dbReference type="Rhea" id="RHEA:11936"/>
        <dbReference type="ChEBI" id="CHEBI:15378"/>
        <dbReference type="ChEBI" id="CHEBI:16526"/>
        <dbReference type="ChEBI" id="CHEBI:45713"/>
        <dbReference type="ChEBI" id="CHEBI:57287"/>
        <dbReference type="ChEBI" id="CHEBI:57355"/>
        <dbReference type="ChEBI" id="CHEBI:57384"/>
        <dbReference type="EC" id="2.3.1.95"/>
    </reaction>
</comment>
<comment type="pathway">
    <text>Phytoalexin biosynthesis; 3,4',5-trihydroxystilbene biosynthesis; 3,4',5-trihydroxystilbene from trans-4-coumarate: step 2/2.</text>
</comment>
<comment type="subunit">
    <text evidence="1">Homodimer.</text>
</comment>
<comment type="subcellular location">
    <subcellularLocation>
        <location>Cytoplasm</location>
    </subcellularLocation>
</comment>
<comment type="induction">
    <text>By stress.</text>
</comment>
<comment type="similarity">
    <text evidence="3">Belongs to the thiolase-like superfamily. Chalcone/stilbene synthases family.</text>
</comment>
<organism>
    <name type="scientific">Vitis vinifera</name>
    <name type="common">Grape</name>
    <dbReference type="NCBI Taxonomy" id="29760"/>
    <lineage>
        <taxon>Eukaryota</taxon>
        <taxon>Viridiplantae</taxon>
        <taxon>Streptophyta</taxon>
        <taxon>Embryophyta</taxon>
        <taxon>Tracheophyta</taxon>
        <taxon>Spermatophyta</taxon>
        <taxon>Magnoliopsida</taxon>
        <taxon>eudicotyledons</taxon>
        <taxon>Gunneridae</taxon>
        <taxon>Pentapetalae</taxon>
        <taxon>rosids</taxon>
        <taxon>Vitales</taxon>
        <taxon>Vitaceae</taxon>
        <taxon>Viteae</taxon>
        <taxon>Vitis</taxon>
    </lineage>
</organism>
<proteinExistence type="evidence at transcript level"/>
<reference key="1">
    <citation type="journal article" date="2007" name="Nature">
        <title>The grapevine genome sequence suggests ancestral hexaploidization in major angiosperm phyla.</title>
        <authorList>
            <person name="Jaillon O."/>
            <person name="Aury J.-M."/>
            <person name="Noel B."/>
            <person name="Policriti A."/>
            <person name="Clepet C."/>
            <person name="Casagrande A."/>
            <person name="Choisne N."/>
            <person name="Aubourg S."/>
            <person name="Vitulo N."/>
            <person name="Jubin C."/>
            <person name="Vezzi A."/>
            <person name="Legeai F."/>
            <person name="Hugueney P."/>
            <person name="Dasilva C."/>
            <person name="Horner D."/>
            <person name="Mica E."/>
            <person name="Jublot D."/>
            <person name="Poulain J."/>
            <person name="Bruyere C."/>
            <person name="Billault A."/>
            <person name="Segurens B."/>
            <person name="Gouyvenoux M."/>
            <person name="Ugarte E."/>
            <person name="Cattonaro F."/>
            <person name="Anthouard V."/>
            <person name="Vico V."/>
            <person name="Del Fabbro C."/>
            <person name="Alaux M."/>
            <person name="Di Gaspero G."/>
            <person name="Dumas V."/>
            <person name="Felice N."/>
            <person name="Paillard S."/>
            <person name="Juman I."/>
            <person name="Moroldo M."/>
            <person name="Scalabrin S."/>
            <person name="Canaguier A."/>
            <person name="Le Clainche I."/>
            <person name="Malacrida G."/>
            <person name="Durand E."/>
            <person name="Pesole G."/>
            <person name="Laucou V."/>
            <person name="Chatelet P."/>
            <person name="Merdinoglu D."/>
            <person name="Delledonne M."/>
            <person name="Pezzotti M."/>
            <person name="Lecharny A."/>
            <person name="Scarpelli C."/>
            <person name="Artiguenave F."/>
            <person name="Pe M.E."/>
            <person name="Valle G."/>
            <person name="Morgante M."/>
            <person name="Caboche M."/>
            <person name="Adam-Blondon A.-F."/>
            <person name="Weissenbach J."/>
            <person name="Quetier F."/>
            <person name="Wincker P."/>
        </authorList>
    </citation>
    <scope>NUCLEOTIDE SEQUENCE [LARGE SCALE GENOMIC DNA]</scope>
    <source>
        <strain>cv. Pinot noir / PN40024</strain>
    </source>
</reference>
<reference key="2">
    <citation type="journal article" date="1991" name="Arch. Biochem. Biophys.">
        <title>Coordinate- and elicitor-dependent expression of stilbene synthase and phenylalanine ammonia-lyase genes in Vitis cv. Optima.</title>
        <authorList>
            <person name="Melchior F."/>
            <person name="Kindl H."/>
        </authorList>
    </citation>
    <scope>NUCLEOTIDE SEQUENCE [MRNA] OF 4-392</scope>
    <source>
        <strain>cv. Optima</strain>
    </source>
</reference>